<dbReference type="EMBL" id="CP000425">
    <property type="protein sequence ID" value="ABJ73029.1"/>
    <property type="molecule type" value="Genomic_DNA"/>
</dbReference>
<dbReference type="RefSeq" id="WP_011676389.1">
    <property type="nucleotide sequence ID" value="NC_008527.1"/>
</dbReference>
<dbReference type="SMR" id="Q02YE3"/>
<dbReference type="KEGG" id="llc:LACR_1522"/>
<dbReference type="HOGENOM" id="CLU_129218_1_0_9"/>
<dbReference type="Proteomes" id="UP000000240">
    <property type="component" value="Chromosome"/>
</dbReference>
<dbReference type="Gene3D" id="1.10.10.10">
    <property type="entry name" value="Winged helix-like DNA-binding domain superfamily/Winged helix DNA-binding domain"/>
    <property type="match status" value="1"/>
</dbReference>
<dbReference type="HAMAP" id="MF_00245">
    <property type="entry name" value="UPF0122"/>
    <property type="match status" value="1"/>
</dbReference>
<dbReference type="InterPro" id="IPR013324">
    <property type="entry name" value="RNA_pol_sigma_r3/r4-like"/>
</dbReference>
<dbReference type="InterPro" id="IPR007394">
    <property type="entry name" value="UPF0122"/>
</dbReference>
<dbReference type="InterPro" id="IPR054831">
    <property type="entry name" value="UPF0122_fam_protein"/>
</dbReference>
<dbReference type="InterPro" id="IPR036388">
    <property type="entry name" value="WH-like_DNA-bd_sf"/>
</dbReference>
<dbReference type="NCBIfam" id="NF001066">
    <property type="entry name" value="PRK00118.1-1"/>
    <property type="match status" value="1"/>
</dbReference>
<dbReference type="NCBIfam" id="NF001068">
    <property type="entry name" value="PRK00118.1-4"/>
    <property type="match status" value="1"/>
</dbReference>
<dbReference type="NCBIfam" id="NF001070">
    <property type="entry name" value="PRK00118.1-6"/>
    <property type="match status" value="1"/>
</dbReference>
<dbReference type="NCBIfam" id="NF045758">
    <property type="entry name" value="YlxM"/>
    <property type="match status" value="1"/>
</dbReference>
<dbReference type="PANTHER" id="PTHR40083">
    <property type="entry name" value="UPF0122 PROTEIN CBO2450/CLC_2298"/>
    <property type="match status" value="1"/>
</dbReference>
<dbReference type="PANTHER" id="PTHR40083:SF1">
    <property type="entry name" value="UPF0122 PROTEIN YLXM"/>
    <property type="match status" value="1"/>
</dbReference>
<dbReference type="Pfam" id="PF04297">
    <property type="entry name" value="UPF0122"/>
    <property type="match status" value="1"/>
</dbReference>
<dbReference type="SUPFAM" id="SSF88659">
    <property type="entry name" value="Sigma3 and sigma4 domains of RNA polymerase sigma factors"/>
    <property type="match status" value="1"/>
</dbReference>
<protein>
    <recommendedName>
        <fullName evidence="1">UPF0122 protein LACR_1522</fullName>
    </recommendedName>
</protein>
<proteinExistence type="inferred from homology"/>
<organism>
    <name type="scientific">Lactococcus lactis subsp. cremoris (strain SK11)</name>
    <dbReference type="NCBI Taxonomy" id="272622"/>
    <lineage>
        <taxon>Bacteria</taxon>
        <taxon>Bacillati</taxon>
        <taxon>Bacillota</taxon>
        <taxon>Bacilli</taxon>
        <taxon>Lactobacillales</taxon>
        <taxon>Streptococcaceae</taxon>
        <taxon>Lactococcus</taxon>
        <taxon>Lactococcus cremoris subsp. cremoris</taxon>
    </lineage>
</organism>
<name>Y1522_LACLS</name>
<evidence type="ECO:0000255" key="1">
    <source>
        <dbReference type="HAMAP-Rule" id="MF_00245"/>
    </source>
</evidence>
<feature type="chain" id="PRO_1000012531" description="UPF0122 protein LACR_1522">
    <location>
        <begin position="1"/>
        <end position="111"/>
    </location>
</feature>
<comment type="function">
    <text evidence="1">Might take part in the signal recognition particle (SRP) pathway. This is inferred from the conservation of its genetic proximity to ftsY/ffh. May be a regulatory protein.</text>
</comment>
<comment type="similarity">
    <text evidence="1">Belongs to the UPF0122 family.</text>
</comment>
<reference key="1">
    <citation type="journal article" date="2006" name="Proc. Natl. Acad. Sci. U.S.A.">
        <title>Comparative genomics of the lactic acid bacteria.</title>
        <authorList>
            <person name="Makarova K.S."/>
            <person name="Slesarev A."/>
            <person name="Wolf Y.I."/>
            <person name="Sorokin A."/>
            <person name="Mirkin B."/>
            <person name="Koonin E.V."/>
            <person name="Pavlov A."/>
            <person name="Pavlova N."/>
            <person name="Karamychev V."/>
            <person name="Polouchine N."/>
            <person name="Shakhova V."/>
            <person name="Grigoriev I."/>
            <person name="Lou Y."/>
            <person name="Rohksar D."/>
            <person name="Lucas S."/>
            <person name="Huang K."/>
            <person name="Goodstein D.M."/>
            <person name="Hawkins T."/>
            <person name="Plengvidhya V."/>
            <person name="Welker D."/>
            <person name="Hughes J."/>
            <person name="Goh Y."/>
            <person name="Benson A."/>
            <person name="Baldwin K."/>
            <person name="Lee J.-H."/>
            <person name="Diaz-Muniz I."/>
            <person name="Dosti B."/>
            <person name="Smeianov V."/>
            <person name="Wechter W."/>
            <person name="Barabote R."/>
            <person name="Lorca G."/>
            <person name="Altermann E."/>
            <person name="Barrangou R."/>
            <person name="Ganesan B."/>
            <person name="Xie Y."/>
            <person name="Rawsthorne H."/>
            <person name="Tamir D."/>
            <person name="Parker C."/>
            <person name="Breidt F."/>
            <person name="Broadbent J.R."/>
            <person name="Hutkins R."/>
            <person name="O'Sullivan D."/>
            <person name="Steele J."/>
            <person name="Unlu G."/>
            <person name="Saier M.H. Jr."/>
            <person name="Klaenhammer T."/>
            <person name="Richardson P."/>
            <person name="Kozyavkin S."/>
            <person name="Weimer B.C."/>
            <person name="Mills D.A."/>
        </authorList>
    </citation>
    <scope>NUCLEOTIDE SEQUENCE [LARGE SCALE GENOMIC DNA]</scope>
    <source>
        <strain>SK11</strain>
    </source>
</reference>
<accession>Q02YE3</accession>
<sequence>MEIEKTNRMNTLFEFYATLLTDKQMNYIELYYADDYSLAEIAEEFNISRQAVYDNIKRTEKVLESYEEKLHLFSNYVVRNQLLEELMKKYPSDQYLISKLQEIQQIDEEEF</sequence>
<gene>
    <name type="ordered locus">LACR_1522</name>
</gene>